<reference key="1">
    <citation type="journal article" date="1993" name="Mol. Plant Microbe Interact.">
        <title>Increased expression of the calmodulin gene of the late blight fungus Phytophthora infestans during pathogenesis on potato.</title>
        <authorList>
            <person name="Pieterse C.M."/>
            <person name="Verbakel H.M."/>
            <person name="Spaans J.H."/>
            <person name="Davidse L.C."/>
            <person name="Govers F."/>
        </authorList>
    </citation>
    <scope>NUCLEOTIDE SEQUENCE [GENOMIC DNA]</scope>
</reference>
<accession>P27165</accession>
<organism>
    <name type="scientific">Phytophthora infestans</name>
    <name type="common">Potato late blight agent</name>
    <name type="synonym">Botrytis infestans</name>
    <dbReference type="NCBI Taxonomy" id="4787"/>
    <lineage>
        <taxon>Eukaryota</taxon>
        <taxon>Sar</taxon>
        <taxon>Stramenopiles</taxon>
        <taxon>Oomycota</taxon>
        <taxon>Peronosporales</taxon>
        <taxon>Peronosporaceae</taxon>
        <taxon>Phytophthora</taxon>
    </lineage>
</organism>
<proteinExistence type="inferred from homology"/>
<gene>
    <name type="primary">CMD1</name>
    <name type="synonym">CALPI</name>
</gene>
<name>CALM_PHYIN</name>
<comment type="function">
    <text>Calmodulin mediates the control of a large number of enzymes, ion channels and other proteins by Ca(2+). Among the enzymes to be stimulated by the calmodulin-Ca(2+) complex are a number of protein kinases and phosphatases.</text>
</comment>
<comment type="miscellaneous">
    <text>This protein has four functional calcium-binding sites.</text>
</comment>
<comment type="similarity">
    <text evidence="3">Belongs to the calmodulin family.</text>
</comment>
<protein>
    <recommendedName>
        <fullName>Calmodulin</fullName>
        <shortName>CaM</shortName>
    </recommendedName>
</protein>
<dbReference type="EMBL" id="M83535">
    <property type="protein sequence ID" value="AAA21424.1"/>
    <property type="molecule type" value="Genomic_DNA"/>
</dbReference>
<dbReference type="SMR" id="P27165"/>
<dbReference type="VEuPathDB" id="FungiDB:PITG_06514"/>
<dbReference type="OMA" id="ARKMKEC"/>
<dbReference type="GO" id="GO:0016460">
    <property type="term" value="C:myosin II complex"/>
    <property type="evidence" value="ECO:0007669"/>
    <property type="project" value="TreeGrafter"/>
</dbReference>
<dbReference type="GO" id="GO:0005509">
    <property type="term" value="F:calcium ion binding"/>
    <property type="evidence" value="ECO:0007669"/>
    <property type="project" value="InterPro"/>
</dbReference>
<dbReference type="CDD" id="cd00051">
    <property type="entry name" value="EFh"/>
    <property type="match status" value="2"/>
</dbReference>
<dbReference type="FunFam" id="1.10.238.10:FF:000034">
    <property type="entry name" value="Calmodulin"/>
    <property type="match status" value="1"/>
</dbReference>
<dbReference type="FunFam" id="1.10.238.10:FF:000006">
    <property type="entry name" value="Calmodulin 1"/>
    <property type="match status" value="1"/>
</dbReference>
<dbReference type="Gene3D" id="1.10.238.10">
    <property type="entry name" value="EF-hand"/>
    <property type="match status" value="3"/>
</dbReference>
<dbReference type="InterPro" id="IPR050230">
    <property type="entry name" value="CALM/Myosin/TropC-like"/>
</dbReference>
<dbReference type="InterPro" id="IPR011992">
    <property type="entry name" value="EF-hand-dom_pair"/>
</dbReference>
<dbReference type="InterPro" id="IPR018247">
    <property type="entry name" value="EF_Hand_1_Ca_BS"/>
</dbReference>
<dbReference type="InterPro" id="IPR002048">
    <property type="entry name" value="EF_hand_dom"/>
</dbReference>
<dbReference type="PANTHER" id="PTHR23048:SF0">
    <property type="entry name" value="CALMODULIN LIKE 3"/>
    <property type="match status" value="1"/>
</dbReference>
<dbReference type="PANTHER" id="PTHR23048">
    <property type="entry name" value="MYOSIN LIGHT CHAIN 1, 3"/>
    <property type="match status" value="1"/>
</dbReference>
<dbReference type="Pfam" id="PF13499">
    <property type="entry name" value="EF-hand_7"/>
    <property type="match status" value="2"/>
</dbReference>
<dbReference type="PRINTS" id="PR00450">
    <property type="entry name" value="RECOVERIN"/>
</dbReference>
<dbReference type="SMART" id="SM00054">
    <property type="entry name" value="EFh"/>
    <property type="match status" value="4"/>
</dbReference>
<dbReference type="SMART" id="SM01184">
    <property type="entry name" value="efhand_Ca_insen"/>
    <property type="match status" value="1"/>
</dbReference>
<dbReference type="SUPFAM" id="SSF47473">
    <property type="entry name" value="EF-hand"/>
    <property type="match status" value="1"/>
</dbReference>
<dbReference type="PROSITE" id="PS00018">
    <property type="entry name" value="EF_HAND_1"/>
    <property type="match status" value="4"/>
</dbReference>
<dbReference type="PROSITE" id="PS50222">
    <property type="entry name" value="EF_HAND_2"/>
    <property type="match status" value="4"/>
</dbReference>
<keyword id="KW-0007">Acetylation</keyword>
<keyword id="KW-0106">Calcium</keyword>
<keyword id="KW-0479">Metal-binding</keyword>
<keyword id="KW-0677">Repeat</keyword>
<evidence type="ECO:0000250" key="1"/>
<evidence type="ECO:0000255" key="2">
    <source>
        <dbReference type="PROSITE-ProRule" id="PRU00448"/>
    </source>
</evidence>
<evidence type="ECO:0000305" key="3"/>
<sequence length="149" mass="16825">MADQLTEEQIAEFKEAFSLFDKDGDGTITTKELGTVMRSLGQNPTEAELQDMINEVDADGNGTIDFPEFLTMMARKMKDTDSEEEILEAFKVFDKDGNGFISAAELRHIMTNLGEKLTDEEVDEMIREADIDGDGQINYEEFVKMMMSK</sequence>
<feature type="initiator methionine" description="Removed" evidence="1">
    <location>
        <position position="1"/>
    </location>
</feature>
<feature type="chain" id="PRO_0000198323" description="Calmodulin">
    <location>
        <begin position="2"/>
        <end position="149"/>
    </location>
</feature>
<feature type="domain" description="EF-hand 1" evidence="2">
    <location>
        <begin position="8"/>
        <end position="43"/>
    </location>
</feature>
<feature type="domain" description="EF-hand 2" evidence="2">
    <location>
        <begin position="44"/>
        <end position="79"/>
    </location>
</feature>
<feature type="domain" description="EF-hand 3" evidence="2">
    <location>
        <begin position="81"/>
        <end position="116"/>
    </location>
</feature>
<feature type="domain" description="EF-hand 4" evidence="2">
    <location>
        <begin position="117"/>
        <end position="149"/>
    </location>
</feature>
<feature type="binding site" evidence="2">
    <location>
        <position position="21"/>
    </location>
    <ligand>
        <name>Ca(2+)</name>
        <dbReference type="ChEBI" id="CHEBI:29108"/>
        <label>1</label>
    </ligand>
</feature>
<feature type="binding site" evidence="2">
    <location>
        <position position="23"/>
    </location>
    <ligand>
        <name>Ca(2+)</name>
        <dbReference type="ChEBI" id="CHEBI:29108"/>
        <label>1</label>
    </ligand>
</feature>
<feature type="binding site" evidence="2">
    <location>
        <position position="25"/>
    </location>
    <ligand>
        <name>Ca(2+)</name>
        <dbReference type="ChEBI" id="CHEBI:29108"/>
        <label>1</label>
    </ligand>
</feature>
<feature type="binding site" evidence="2">
    <location>
        <position position="27"/>
    </location>
    <ligand>
        <name>Ca(2+)</name>
        <dbReference type="ChEBI" id="CHEBI:29108"/>
        <label>1</label>
    </ligand>
</feature>
<feature type="binding site" evidence="2">
    <location>
        <position position="32"/>
    </location>
    <ligand>
        <name>Ca(2+)</name>
        <dbReference type="ChEBI" id="CHEBI:29108"/>
        <label>1</label>
    </ligand>
</feature>
<feature type="binding site" evidence="2">
    <location>
        <position position="57"/>
    </location>
    <ligand>
        <name>Ca(2+)</name>
        <dbReference type="ChEBI" id="CHEBI:29108"/>
        <label>2</label>
    </ligand>
</feature>
<feature type="binding site" evidence="2">
    <location>
        <position position="59"/>
    </location>
    <ligand>
        <name>Ca(2+)</name>
        <dbReference type="ChEBI" id="CHEBI:29108"/>
        <label>2</label>
    </ligand>
</feature>
<feature type="binding site" evidence="2">
    <location>
        <position position="61"/>
    </location>
    <ligand>
        <name>Ca(2+)</name>
        <dbReference type="ChEBI" id="CHEBI:29108"/>
        <label>2</label>
    </ligand>
</feature>
<feature type="binding site" evidence="2">
    <location>
        <position position="63"/>
    </location>
    <ligand>
        <name>Ca(2+)</name>
        <dbReference type="ChEBI" id="CHEBI:29108"/>
        <label>2</label>
    </ligand>
</feature>
<feature type="binding site" evidence="2">
    <location>
        <position position="68"/>
    </location>
    <ligand>
        <name>Ca(2+)</name>
        <dbReference type="ChEBI" id="CHEBI:29108"/>
        <label>2</label>
    </ligand>
</feature>
<feature type="binding site" evidence="2">
    <location>
        <position position="94"/>
    </location>
    <ligand>
        <name>Ca(2+)</name>
        <dbReference type="ChEBI" id="CHEBI:29108"/>
        <label>3</label>
    </ligand>
</feature>
<feature type="binding site" evidence="2">
    <location>
        <position position="96"/>
    </location>
    <ligand>
        <name>Ca(2+)</name>
        <dbReference type="ChEBI" id="CHEBI:29108"/>
        <label>3</label>
    </ligand>
</feature>
<feature type="binding site" evidence="2">
    <location>
        <position position="98"/>
    </location>
    <ligand>
        <name>Ca(2+)</name>
        <dbReference type="ChEBI" id="CHEBI:29108"/>
        <label>3</label>
    </ligand>
</feature>
<feature type="binding site" evidence="2">
    <location>
        <position position="105"/>
    </location>
    <ligand>
        <name>Ca(2+)</name>
        <dbReference type="ChEBI" id="CHEBI:29108"/>
        <label>3</label>
    </ligand>
</feature>
<feature type="binding site" evidence="2">
    <location>
        <position position="130"/>
    </location>
    <ligand>
        <name>Ca(2+)</name>
        <dbReference type="ChEBI" id="CHEBI:29108"/>
        <label>4</label>
    </ligand>
</feature>
<feature type="binding site" evidence="2">
    <location>
        <position position="132"/>
    </location>
    <ligand>
        <name>Ca(2+)</name>
        <dbReference type="ChEBI" id="CHEBI:29108"/>
        <label>4</label>
    </ligand>
</feature>
<feature type="binding site" evidence="2">
    <location>
        <position position="134"/>
    </location>
    <ligand>
        <name>Ca(2+)</name>
        <dbReference type="ChEBI" id="CHEBI:29108"/>
        <label>4</label>
    </ligand>
</feature>
<feature type="binding site" evidence="2">
    <location>
        <position position="136"/>
    </location>
    <ligand>
        <name>Ca(2+)</name>
        <dbReference type="ChEBI" id="CHEBI:29108"/>
        <label>4</label>
    </ligand>
</feature>
<feature type="binding site" evidence="2">
    <location>
        <position position="141"/>
    </location>
    <ligand>
        <name>Ca(2+)</name>
        <dbReference type="ChEBI" id="CHEBI:29108"/>
        <label>4</label>
    </ligand>
</feature>
<feature type="modified residue" description="N-acetylalanine" evidence="1">
    <location>
        <position position="2"/>
    </location>
</feature>